<keyword id="KW-0002">3D-structure</keyword>
<keyword id="KW-0903">Direct protein sequencing</keyword>
<keyword id="KW-0808">Transferase</keyword>
<name>12S_PROFR</name>
<sequence>MAENNNLKLASTMEGRVEQLAEQRQVIEAGGGERRVEKQHSQGKQTARERLNNLLDPHSFDEVGAFRKHRTTLFGMDKAVVPADGVVTGRGTILGRPVHAASQDFTVMGGSAGETQSTKVVETMEQALLTGTPFLFFYDSGGARIQEGIDSLSGYGKMFFANVKLSGVVPQIAIIAGPCAGGASYSPALTDFIIMTKKAHMFITGPQVIKSVTGEDVTADELGGAEAHMAISGNIHFVAEDDDAAELIAKKLLSFLPQNNTEEASFVNPNNDVSPNTELRDIVPIDGKKGYDVRDVIAKIVDWGDYLEVKAGYATNLVTAFARVNGRSVGIVANQPSVMSGCLDINASDKAAEFVNFCDSFNIPLVQLVDVPGFLPGVQQEYGGIIRHGAKMLYAYSEATVPKITVVLRKAYGGSYLAMCNRDLGADAVYAWPSAEIAVMGAEGAANVIFRKEIKAADDPDAMRAEKIEEYQNAFNTPYVAAARGQVDDVIDPADTRRKIASALEMYATKRQTRPAKKHGNFPC</sequence>
<accession>Q8GBW6</accession>
<accession>Q05617</accession>
<proteinExistence type="evidence at protein level"/>
<feature type="initiator methionine" description="Removed" evidence="5">
    <location>
        <position position="1"/>
    </location>
</feature>
<feature type="chain" id="PRO_0000146817" description="Methylmalonyl-CoA carboxyltransferase 12S subunit">
    <location>
        <begin position="2"/>
        <end position="524"/>
    </location>
</feature>
<feature type="domain" description="CoA carboxyltransferase N-terminal" evidence="1">
    <location>
        <begin position="13"/>
        <end position="268"/>
    </location>
</feature>
<feature type="domain" description="CoA carboxyltransferase C-terminal" evidence="2">
    <location>
        <begin position="274"/>
        <end position="506"/>
    </location>
</feature>
<feature type="region of interest" description="Carboxyltransferase" evidence="3">
    <location>
        <begin position="13"/>
        <end position="506"/>
    </location>
</feature>
<feature type="sequence conflict" description="In Ref. 1; AAA25676." evidence="7" ref="1">
    <original>R</original>
    <variation>L</variation>
    <location>
        <position position="35"/>
    </location>
</feature>
<feature type="sequence conflict" description="In Ref. 1; AAA25676." evidence="7" ref="1">
    <original>GETQSTKVVETMEQ</original>
    <variation>WRDAVHEGRRDDGT</variation>
    <location>
        <begin position="113"/>
        <end position="126"/>
    </location>
</feature>
<feature type="sequence conflict" description="In Ref. 1; AAA25676." evidence="7" ref="1">
    <location>
        <position position="143"/>
    </location>
</feature>
<feature type="sequence conflict" description="In Ref. 1; AAA25676." evidence="7" ref="1">
    <original>GG</original>
    <variation>C</variation>
    <location>
        <begin position="181"/>
        <end position="182"/>
    </location>
</feature>
<feature type="sequence conflict" description="In Ref. 1; AAA25676." evidence="7" ref="1">
    <original>AHMAISGNIH</original>
    <variation>PIWPSRAIY</variation>
    <location>
        <begin position="227"/>
        <end position="236"/>
    </location>
</feature>
<feature type="sequence conflict" description="In Ref. 1; AAA25676." evidence="7" ref="1">
    <location>
        <position position="377"/>
    </location>
</feature>
<feature type="sequence conflict" description="In Ref. 1; AAA25676." evidence="7" ref="1">
    <original>A</original>
    <variation>R</variation>
    <location>
        <position position="390"/>
    </location>
</feature>
<feature type="sequence conflict" description="In Ref. 1; AAA25676." evidence="7" ref="1">
    <original>VVLRKAYGGSYLAMCNRDLGADAVYAW</original>
    <variation>CLATPTAAPTWPCATVTLVPTPCTPV</variation>
    <location>
        <begin position="406"/>
        <end position="432"/>
    </location>
</feature>
<feature type="sequence conflict" description="In Ref. 1; AAA25676." evidence="7" ref="1">
    <original>AFNTPYVAA</original>
    <variation>GSTRRTWR</variation>
    <location>
        <begin position="474"/>
        <end position="482"/>
    </location>
</feature>
<feature type="sequence conflict" description="In Ref. 1; AAA25676." evidence="7" ref="1">
    <original>HGNFPC</original>
    <variation>PWKLPLLSEEEIMADEEEKDLMIATLNKRVASLESELGSLQSDTQGVTEDVLTAISAVAAYLGNDGSAEVVHFAPSPNWVREGRRALQNHSIR</variation>
    <location>
        <begin position="519"/>
        <end position="524"/>
    </location>
</feature>
<feature type="helix" evidence="10">
    <location>
        <begin position="13"/>
        <end position="28"/>
    </location>
</feature>
<feature type="turn" evidence="10">
    <location>
        <begin position="29"/>
        <end position="31"/>
    </location>
</feature>
<feature type="helix" evidence="10">
    <location>
        <begin position="33"/>
        <end position="41"/>
    </location>
</feature>
<feature type="helix" evidence="10">
    <location>
        <begin position="47"/>
        <end position="54"/>
    </location>
</feature>
<feature type="strand" evidence="10">
    <location>
        <begin position="61"/>
        <end position="63"/>
    </location>
</feature>
<feature type="turn" evidence="10">
    <location>
        <begin position="73"/>
        <end position="78"/>
    </location>
</feature>
<feature type="helix" evidence="10">
    <location>
        <begin position="82"/>
        <end position="85"/>
    </location>
</feature>
<feature type="strand" evidence="10">
    <location>
        <begin position="86"/>
        <end position="93"/>
    </location>
</feature>
<feature type="strand" evidence="10">
    <location>
        <begin position="96"/>
        <end position="103"/>
    </location>
</feature>
<feature type="turn" evidence="10">
    <location>
        <begin position="105"/>
        <end position="107"/>
    </location>
</feature>
<feature type="helix" evidence="10">
    <location>
        <begin position="108"/>
        <end position="110"/>
    </location>
</feature>
<feature type="helix" evidence="10">
    <location>
        <begin position="114"/>
        <end position="130"/>
    </location>
</feature>
<feature type="strand" evidence="10">
    <location>
        <begin position="134"/>
        <end position="140"/>
    </location>
</feature>
<feature type="helix" evidence="10">
    <location>
        <begin position="145"/>
        <end position="148"/>
    </location>
</feature>
<feature type="helix" evidence="10">
    <location>
        <begin position="149"/>
        <end position="165"/>
    </location>
</feature>
<feature type="turn" evidence="10">
    <location>
        <begin position="166"/>
        <end position="168"/>
    </location>
</feature>
<feature type="strand" evidence="10">
    <location>
        <begin position="171"/>
        <end position="181"/>
    </location>
</feature>
<feature type="helix" evidence="10">
    <location>
        <begin position="182"/>
        <end position="184"/>
    </location>
</feature>
<feature type="helix" evidence="10">
    <location>
        <begin position="185"/>
        <end position="189"/>
    </location>
</feature>
<feature type="strand" evidence="10">
    <location>
        <begin position="190"/>
        <end position="196"/>
    </location>
</feature>
<feature type="strand" evidence="10">
    <location>
        <begin position="200"/>
        <end position="204"/>
    </location>
</feature>
<feature type="helix" evidence="10">
    <location>
        <begin position="206"/>
        <end position="213"/>
    </location>
</feature>
<feature type="helix" evidence="10">
    <location>
        <begin position="219"/>
        <end position="223"/>
    </location>
</feature>
<feature type="helix" evidence="10">
    <location>
        <begin position="225"/>
        <end position="230"/>
    </location>
</feature>
<feature type="strand" evidence="10">
    <location>
        <begin position="236"/>
        <end position="241"/>
    </location>
</feature>
<feature type="helix" evidence="10">
    <location>
        <begin position="242"/>
        <end position="254"/>
    </location>
</feature>
<feature type="helix" evidence="10">
    <location>
        <begin position="277"/>
        <end position="281"/>
    </location>
</feature>
<feature type="helix" evidence="10">
    <location>
        <begin position="294"/>
        <end position="300"/>
    </location>
</feature>
<feature type="helix" evidence="10">
    <location>
        <begin position="302"/>
        <end position="304"/>
    </location>
</feature>
<feature type="strand" evidence="10">
    <location>
        <begin position="306"/>
        <end position="310"/>
    </location>
</feature>
<feature type="strand" evidence="10">
    <location>
        <begin position="317"/>
        <end position="324"/>
    </location>
</feature>
<feature type="strand" evidence="10">
    <location>
        <begin position="327"/>
        <end position="334"/>
    </location>
</feature>
<feature type="helix" evidence="10">
    <location>
        <begin position="339"/>
        <end position="341"/>
    </location>
</feature>
<feature type="helix" evidence="10">
    <location>
        <begin position="345"/>
        <end position="360"/>
    </location>
</feature>
<feature type="strand" evidence="10">
    <location>
        <begin position="365"/>
        <end position="371"/>
    </location>
</feature>
<feature type="helix" evidence="10">
    <location>
        <begin position="378"/>
        <end position="382"/>
    </location>
</feature>
<feature type="helix" evidence="10">
    <location>
        <begin position="385"/>
        <end position="398"/>
    </location>
</feature>
<feature type="strand" evidence="10">
    <location>
        <begin position="403"/>
        <end position="412"/>
    </location>
</feature>
<feature type="helix" evidence="10">
    <location>
        <begin position="413"/>
        <end position="417"/>
    </location>
</feature>
<feature type="turn" evidence="10">
    <location>
        <begin position="418"/>
        <end position="420"/>
    </location>
</feature>
<feature type="helix" evidence="10">
    <location>
        <begin position="422"/>
        <end position="424"/>
    </location>
</feature>
<feature type="strand" evidence="10">
    <location>
        <begin position="427"/>
        <end position="431"/>
    </location>
</feature>
<feature type="strand" evidence="10">
    <location>
        <begin position="436"/>
        <end position="440"/>
    </location>
</feature>
<feature type="helix" evidence="10">
    <location>
        <begin position="442"/>
        <end position="449"/>
    </location>
</feature>
<feature type="helix" evidence="10">
    <location>
        <begin position="451"/>
        <end position="456"/>
    </location>
</feature>
<feature type="strand" evidence="11">
    <location>
        <begin position="457"/>
        <end position="459"/>
    </location>
</feature>
<feature type="helix" evidence="10">
    <location>
        <begin position="460"/>
        <end position="475"/>
    </location>
</feature>
<feature type="helix" evidence="10">
    <location>
        <begin position="478"/>
        <end position="483"/>
    </location>
</feature>
<feature type="strand" evidence="10">
    <location>
        <begin position="486"/>
        <end position="490"/>
    </location>
</feature>
<feature type="helix" evidence="10">
    <location>
        <begin position="493"/>
        <end position="495"/>
    </location>
</feature>
<feature type="helix" evidence="10">
    <location>
        <begin position="496"/>
        <end position="506"/>
    </location>
</feature>
<feature type="helix" evidence="10">
    <location>
        <begin position="507"/>
        <end position="509"/>
    </location>
</feature>
<organism>
    <name type="scientific">Propionibacterium freudenreichii subsp. shermanii</name>
    <dbReference type="NCBI Taxonomy" id="1752"/>
    <lineage>
        <taxon>Bacteria</taxon>
        <taxon>Bacillati</taxon>
        <taxon>Actinomycetota</taxon>
        <taxon>Actinomycetes</taxon>
        <taxon>Propionibacteriales</taxon>
        <taxon>Propionibacteriaceae</taxon>
        <taxon>Propionibacterium</taxon>
    </lineage>
</organism>
<protein>
    <recommendedName>
        <fullName>Methylmalonyl-CoA carboxyltransferase 12S subunit</fullName>
        <ecNumber evidence="5">2.1.3.1</ecNumber>
    </recommendedName>
    <alternativeName>
        <fullName evidence="6">Transcarboxylase 12S subunit</fullName>
    </alternativeName>
</protein>
<reference key="1">
    <citation type="journal article" date="1993" name="J. Bacteriol.">
        <title>Primary structure of the monomer of the 12S subunit of transcarboxylase as deduced from DNA and characterization of the product expressed in Escherichia coli.</title>
        <authorList>
            <person name="Thornton C.G."/>
            <person name="Kumar G.K."/>
            <person name="Haase F.C."/>
            <person name="Phillips N.F.B."/>
            <person name="Woo S.B."/>
            <person name="Park V.M."/>
            <person name="Magner W.J."/>
            <person name="Shenoy B.C."/>
            <person name="Wood H.G."/>
            <person name="Samols D."/>
        </authorList>
    </citation>
    <scope>NUCLEOTIDE SEQUENCE [GENOMIC DNA]</scope>
    <scope>PROTEIN SEQUENCE OF 2-6; 13-39; 56-63; 71-112; 199-213; 252-280; 351-372; 395-405 AND 500-516</scope>
    <scope>FUNCTION</scope>
    <scope>CATALYTIC ACTIVITY</scope>
    <scope>SUBUNIT</scope>
    <source>
        <strain>St33</strain>
    </source>
</reference>
<reference evidence="8 9" key="2">
    <citation type="journal article" date="2003" name="EMBO J.">
        <title>Transcarboxylase 12S crystal structure: hexamer assembly and substrate binding to a multienzyme core.</title>
        <authorList>
            <person name="Hall P.R."/>
            <person name="Wang Y.-F."/>
            <person name="Rivera-Hainaj R.E."/>
            <person name="Zheng X."/>
            <person name="Pusztai-Carey M."/>
            <person name="Carey P.R."/>
            <person name="Yee V.C."/>
        </authorList>
    </citation>
    <scope>NUCLEOTIDE SEQUENCE [MRNA]</scope>
    <scope>X-RAY CRYSTALLOGRAPHY (1.9 ANGSTROMS)</scope>
</reference>
<comment type="function">
    <text evidence="5">The 12S subunit specifically catalyzes the transfer of the carboxyl group of methylmalonyl CoA to the biotin of the 1.3S subunit forming propanoyl-CoA and carboxylated 1.3S-biotin.</text>
</comment>
<comment type="catalytic activity">
    <reaction evidence="5">
        <text>(S)-methylmalonyl-CoA + pyruvate = propanoyl-CoA + oxaloacetate</text>
        <dbReference type="Rhea" id="RHEA:20764"/>
        <dbReference type="ChEBI" id="CHEBI:15361"/>
        <dbReference type="ChEBI" id="CHEBI:16452"/>
        <dbReference type="ChEBI" id="CHEBI:57327"/>
        <dbReference type="ChEBI" id="CHEBI:57392"/>
        <dbReference type="EC" id="2.1.3.1"/>
    </reaction>
</comment>
<comment type="subunit">
    <text evidence="4 5 7">Homohexamer (PubMed:12743028, PubMed:8366018). Transcarboxylase is composed of three subunits: 1.3S, 5S, and 12S. The core of the enzyme is composed of six 12S subunits. On each side of the core there are three pairs of 5S subunits. Each 5S dimer is attached to the core by two 1.3S subunits. Thus the total number of chains is 30 (6 + 12 + 12) (Probable).</text>
</comment>
<dbReference type="EC" id="2.1.3.1" evidence="5"/>
<dbReference type="EMBL" id="L04196">
    <property type="protein sequence ID" value="AAA25676.1"/>
    <property type="molecule type" value="Genomic_DNA"/>
</dbReference>
<dbReference type="EMBL" id="AJ535715">
    <property type="protein sequence ID" value="CAD59919.1"/>
    <property type="molecule type" value="mRNA"/>
</dbReference>
<dbReference type="PIR" id="A48665">
    <property type="entry name" value="A48665"/>
</dbReference>
<dbReference type="RefSeq" id="WP_013161731.1">
    <property type="nucleotide sequence ID" value="NZ_JBHSTU010000026.1"/>
</dbReference>
<dbReference type="PDB" id="1ON3">
    <property type="method" value="X-ray"/>
    <property type="resolution" value="1.90 A"/>
    <property type="chains" value="A/B/C/D/E/F=2-518"/>
</dbReference>
<dbReference type="PDB" id="1ON9">
    <property type="method" value="X-ray"/>
    <property type="resolution" value="2.00 A"/>
    <property type="chains" value="A/B/C/D/E/F=2-518"/>
</dbReference>
<dbReference type="PDBsum" id="1ON3"/>
<dbReference type="PDBsum" id="1ON9"/>
<dbReference type="SMR" id="Q8GBW6"/>
<dbReference type="DrugBank" id="DB04045">
    <property type="generic name" value="(R)-methylmalonyl-CoA"/>
</dbReference>
<dbReference type="DrugBank" id="DB04183">
    <property type="generic name" value="Methylmalonic Acid"/>
</dbReference>
<dbReference type="GeneID" id="61221526"/>
<dbReference type="OMA" id="HYKYERT"/>
<dbReference type="BioCyc" id="MetaCyc:MONOMER-12429"/>
<dbReference type="BRENDA" id="2.1.3.1">
    <property type="organism ID" value="5032"/>
</dbReference>
<dbReference type="EvolutionaryTrace" id="Q8GBW6"/>
<dbReference type="GO" id="GO:0009317">
    <property type="term" value="C:acetyl-CoA carboxylase complex"/>
    <property type="evidence" value="ECO:0007669"/>
    <property type="project" value="InterPro"/>
</dbReference>
<dbReference type="GO" id="GO:0003989">
    <property type="term" value="F:acetyl-CoA carboxylase activity"/>
    <property type="evidence" value="ECO:0007669"/>
    <property type="project" value="InterPro"/>
</dbReference>
<dbReference type="GO" id="GO:0047154">
    <property type="term" value="F:methylmalonyl-CoA carboxytransferase activity"/>
    <property type="evidence" value="ECO:0007669"/>
    <property type="project" value="UniProtKB-EC"/>
</dbReference>
<dbReference type="GO" id="GO:0004658">
    <property type="term" value="F:propionyl-CoA carboxylase activity"/>
    <property type="evidence" value="ECO:0007669"/>
    <property type="project" value="TreeGrafter"/>
</dbReference>
<dbReference type="GO" id="GO:0006633">
    <property type="term" value="P:fatty acid biosynthetic process"/>
    <property type="evidence" value="ECO:0007669"/>
    <property type="project" value="InterPro"/>
</dbReference>
<dbReference type="FunFam" id="3.90.226.10:FF:000017">
    <property type="entry name" value="Propionyl-CoA carboxylase subunit beta 5"/>
    <property type="match status" value="1"/>
</dbReference>
<dbReference type="Gene3D" id="3.90.226.10">
    <property type="entry name" value="2-enoyl-CoA Hydratase, Chain A, domain 1"/>
    <property type="match status" value="2"/>
</dbReference>
<dbReference type="InterPro" id="IPR051047">
    <property type="entry name" value="AccD/PCCB"/>
</dbReference>
<dbReference type="InterPro" id="IPR034733">
    <property type="entry name" value="AcCoA_carboxyl_beta"/>
</dbReference>
<dbReference type="InterPro" id="IPR000438">
    <property type="entry name" value="Acetyl_CoA_COase_Trfase_b_su"/>
</dbReference>
<dbReference type="InterPro" id="IPR029045">
    <property type="entry name" value="ClpP/crotonase-like_dom_sf"/>
</dbReference>
<dbReference type="InterPro" id="IPR011763">
    <property type="entry name" value="COA_CT_C"/>
</dbReference>
<dbReference type="InterPro" id="IPR011762">
    <property type="entry name" value="COA_CT_N"/>
</dbReference>
<dbReference type="PANTHER" id="PTHR43842">
    <property type="entry name" value="PROPIONYL-COA CARBOXYLASE BETA CHAIN"/>
    <property type="match status" value="1"/>
</dbReference>
<dbReference type="PANTHER" id="PTHR43842:SF2">
    <property type="entry name" value="PROPIONYL-COA CARBOXYLASE BETA CHAIN, MITOCHONDRIAL"/>
    <property type="match status" value="1"/>
</dbReference>
<dbReference type="Pfam" id="PF01039">
    <property type="entry name" value="Carboxyl_trans"/>
    <property type="match status" value="1"/>
</dbReference>
<dbReference type="PRINTS" id="PR01070">
    <property type="entry name" value="ACCCTRFRASEB"/>
</dbReference>
<dbReference type="SUPFAM" id="SSF52096">
    <property type="entry name" value="ClpP/crotonase"/>
    <property type="match status" value="2"/>
</dbReference>
<dbReference type="PROSITE" id="PS50989">
    <property type="entry name" value="COA_CT_CTER"/>
    <property type="match status" value="1"/>
</dbReference>
<dbReference type="PROSITE" id="PS50980">
    <property type="entry name" value="COA_CT_NTER"/>
    <property type="match status" value="1"/>
</dbReference>
<evidence type="ECO:0000255" key="1">
    <source>
        <dbReference type="PROSITE-ProRule" id="PRU01136"/>
    </source>
</evidence>
<evidence type="ECO:0000255" key="2">
    <source>
        <dbReference type="PROSITE-ProRule" id="PRU01137"/>
    </source>
</evidence>
<evidence type="ECO:0000255" key="3">
    <source>
        <dbReference type="PROSITE-ProRule" id="PRU01138"/>
    </source>
</evidence>
<evidence type="ECO:0000269" key="4">
    <source>
    </source>
</evidence>
<evidence type="ECO:0000269" key="5">
    <source>
    </source>
</evidence>
<evidence type="ECO:0000303" key="6">
    <source>
    </source>
</evidence>
<evidence type="ECO:0000305" key="7"/>
<evidence type="ECO:0007744" key="8">
    <source>
        <dbReference type="PDB" id="1ON3"/>
    </source>
</evidence>
<evidence type="ECO:0007744" key="9">
    <source>
        <dbReference type="PDB" id="1ON9"/>
    </source>
</evidence>
<evidence type="ECO:0007829" key="10">
    <source>
        <dbReference type="PDB" id="1ON3"/>
    </source>
</evidence>
<evidence type="ECO:0007829" key="11">
    <source>
        <dbReference type="PDB" id="1ON9"/>
    </source>
</evidence>